<accession>Q11074</accession>
<keyword id="KW-1185">Reference proteome</keyword>
<protein>
    <recommendedName>
        <fullName>Uncharacterized protein B0416.7</fullName>
    </recommendedName>
</protein>
<dbReference type="EMBL" id="FO080200">
    <property type="protein sequence ID" value="CCD61926.1"/>
    <property type="molecule type" value="Genomic_DNA"/>
</dbReference>
<dbReference type="PIR" id="F89606">
    <property type="entry name" value="F89606"/>
</dbReference>
<dbReference type="RefSeq" id="NP_001041210.1">
    <property type="nucleotide sequence ID" value="NM_001047745.2"/>
</dbReference>
<dbReference type="FunCoup" id="Q11074">
    <property type="interactions" value="822"/>
</dbReference>
<dbReference type="PaxDb" id="6239-B0416.7a"/>
<dbReference type="PeptideAtlas" id="Q11074"/>
<dbReference type="EnsemblMetazoa" id="B0416.7a.1">
    <property type="protein sequence ID" value="B0416.7a.1"/>
    <property type="gene ID" value="WBGene00015182"/>
</dbReference>
<dbReference type="GeneID" id="181986"/>
<dbReference type="KEGG" id="cel:CELE_B0416.7"/>
<dbReference type="UCSC" id="B0416.7a">
    <property type="organism name" value="c. elegans"/>
</dbReference>
<dbReference type="AGR" id="WB:WBGene00015182"/>
<dbReference type="CTD" id="181986"/>
<dbReference type="WormBase" id="B0416.7a">
    <property type="protein sequence ID" value="CE02437"/>
    <property type="gene ID" value="WBGene00015182"/>
</dbReference>
<dbReference type="eggNOG" id="ENOG502THSU">
    <property type="taxonomic scope" value="Eukaryota"/>
</dbReference>
<dbReference type="HOGENOM" id="CLU_134609_2_0_1"/>
<dbReference type="InParanoid" id="Q11074"/>
<dbReference type="OMA" id="CVRIRVI"/>
<dbReference type="OrthoDB" id="5791379at2759"/>
<dbReference type="PhylomeDB" id="Q11074"/>
<dbReference type="PRO" id="PR:Q11074"/>
<dbReference type="Proteomes" id="UP000001940">
    <property type="component" value="Chromosome X"/>
</dbReference>
<dbReference type="Bgee" id="WBGene00015182">
    <property type="expression patterns" value="Expressed in larva and 2 other cell types or tissues"/>
</dbReference>
<dbReference type="ExpressionAtlas" id="Q11074">
    <property type="expression patterns" value="baseline and differential"/>
</dbReference>
<dbReference type="InterPro" id="IPR008588">
    <property type="entry name" value="DUF870_CAE_spp"/>
</dbReference>
<dbReference type="PANTHER" id="PTHR21479">
    <property type="match status" value="1"/>
</dbReference>
<dbReference type="PANTHER" id="PTHR21479:SF28">
    <property type="entry name" value="PROTEIN CBG24148"/>
    <property type="match status" value="1"/>
</dbReference>
<dbReference type="Pfam" id="PF05912">
    <property type="entry name" value="DUF870"/>
    <property type="match status" value="1"/>
</dbReference>
<name>YT47_CAEEL</name>
<reference key="1">
    <citation type="journal article" date="1998" name="Science">
        <title>Genome sequence of the nematode C. elegans: a platform for investigating biology.</title>
        <authorList>
            <consortium name="The C. elegans sequencing consortium"/>
        </authorList>
    </citation>
    <scope>NUCLEOTIDE SEQUENCE [LARGE SCALE GENOMIC DNA]</scope>
    <source>
        <strain>Bristol N2</strain>
    </source>
</reference>
<sequence>MNLSTAIISCLCIGVLSYENKFQFTGTVYCKSNAPWCVRIRVIEVDTLVDDGVASVDFCSNEVTQTYDIGGVQENDGLLDRNFELQMVVFHNCSRNTETVFKTGIWRIPLPKAPTVHAPIRQHLNLNTNNSQ</sequence>
<feature type="chain" id="PRO_0000065082" description="Uncharacterized protein B0416.7">
    <location>
        <begin position="1"/>
        <end position="132"/>
    </location>
</feature>
<organism>
    <name type="scientific">Caenorhabditis elegans</name>
    <dbReference type="NCBI Taxonomy" id="6239"/>
    <lineage>
        <taxon>Eukaryota</taxon>
        <taxon>Metazoa</taxon>
        <taxon>Ecdysozoa</taxon>
        <taxon>Nematoda</taxon>
        <taxon>Chromadorea</taxon>
        <taxon>Rhabditida</taxon>
        <taxon>Rhabditina</taxon>
        <taxon>Rhabditomorpha</taxon>
        <taxon>Rhabditoidea</taxon>
        <taxon>Rhabditidae</taxon>
        <taxon>Peloderinae</taxon>
        <taxon>Caenorhabditis</taxon>
    </lineage>
</organism>
<gene>
    <name type="ORF">B0416.7</name>
</gene>
<proteinExistence type="predicted"/>